<name>C562_ECO57</name>
<proteinExistence type="inferred from homology"/>
<comment type="function">
    <text evidence="1">Electron-transport protein of unknown function.</text>
</comment>
<comment type="cofactor">
    <cofactor evidence="1">
        <name>heme b</name>
        <dbReference type="ChEBI" id="CHEBI:60344"/>
    </cofactor>
    <text evidence="1">Binds 1 heme b (iron(II)-protoporphyrin IX) group per molecule.</text>
</comment>
<comment type="subunit">
    <text evidence="1">Monomer.</text>
</comment>
<comment type="subcellular location">
    <subcellularLocation>
        <location evidence="1">Periplasm</location>
    </subcellularLocation>
</comment>
<comment type="similarity">
    <text evidence="2">Belongs to the cytochrome b562 family.</text>
</comment>
<comment type="sequence caution" evidence="2">
    <conflict type="erroneous initiation">
        <sequence resource="EMBL-CDS" id="AAG59433"/>
    </conflict>
    <text>Truncated N-terminus.</text>
</comment>
<organism>
    <name type="scientific">Escherichia coli O157:H7</name>
    <dbReference type="NCBI Taxonomy" id="83334"/>
    <lineage>
        <taxon>Bacteria</taxon>
        <taxon>Pseudomonadati</taxon>
        <taxon>Pseudomonadota</taxon>
        <taxon>Gammaproteobacteria</taxon>
        <taxon>Enterobacterales</taxon>
        <taxon>Enterobacteriaceae</taxon>
        <taxon>Escherichia</taxon>
    </lineage>
</organism>
<gene>
    <name type="primary">cybC</name>
    <name type="ordered locus">Z5846</name>
    <name type="ordered locus">ECs5213</name>
</gene>
<sequence length="128" mass="14063">MRKSLLAILAVSSLVFSSASFAADLEDNMETLNDNLKVVEKADNAAQVKDALTKMRAAALDAQKATPPKLEDKSPDSPEMKDFRHGFDILVGQIDDALKLANEGKVKEAQAAAEQLKTTRNSYHKKYR</sequence>
<dbReference type="EMBL" id="AE005174">
    <property type="protein sequence ID" value="AAG59433.1"/>
    <property type="status" value="ALT_INIT"/>
    <property type="molecule type" value="Genomic_DNA"/>
</dbReference>
<dbReference type="EMBL" id="BA000007">
    <property type="protein sequence ID" value="BAB38636.2"/>
    <property type="molecule type" value="Genomic_DNA"/>
</dbReference>
<dbReference type="RefSeq" id="NP_313240.2">
    <property type="nucleotide sequence ID" value="NC_002695.1"/>
</dbReference>
<dbReference type="RefSeq" id="WP_001232245.1">
    <property type="nucleotide sequence ID" value="NZ_VOAI01000023.1"/>
</dbReference>
<dbReference type="BMRB" id="P0ABE8"/>
<dbReference type="SMR" id="P0ABE8"/>
<dbReference type="STRING" id="155864.Z5846"/>
<dbReference type="GeneID" id="913867"/>
<dbReference type="KEGG" id="ece:Z5846"/>
<dbReference type="KEGG" id="ecs:ECs_5213"/>
<dbReference type="PATRIC" id="fig|386585.9.peg.5449"/>
<dbReference type="eggNOG" id="COG3783">
    <property type="taxonomic scope" value="Bacteria"/>
</dbReference>
<dbReference type="HOGENOM" id="CLU_140814_1_1_6"/>
<dbReference type="OMA" id="ATRNENH"/>
<dbReference type="Proteomes" id="UP000000558">
    <property type="component" value="Chromosome"/>
</dbReference>
<dbReference type="Proteomes" id="UP000002519">
    <property type="component" value="Chromosome"/>
</dbReference>
<dbReference type="GO" id="GO:0042597">
    <property type="term" value="C:periplasmic space"/>
    <property type="evidence" value="ECO:0007669"/>
    <property type="project" value="UniProtKB-SubCell"/>
</dbReference>
<dbReference type="GO" id="GO:0009055">
    <property type="term" value="F:electron transfer activity"/>
    <property type="evidence" value="ECO:0007669"/>
    <property type="project" value="InterPro"/>
</dbReference>
<dbReference type="GO" id="GO:0020037">
    <property type="term" value="F:heme binding"/>
    <property type="evidence" value="ECO:0007669"/>
    <property type="project" value="InterPro"/>
</dbReference>
<dbReference type="GO" id="GO:0005506">
    <property type="term" value="F:iron ion binding"/>
    <property type="evidence" value="ECO:0007669"/>
    <property type="project" value="InterPro"/>
</dbReference>
<dbReference type="GO" id="GO:0022900">
    <property type="term" value="P:electron transport chain"/>
    <property type="evidence" value="ECO:0007669"/>
    <property type="project" value="InterPro"/>
</dbReference>
<dbReference type="Gene3D" id="1.20.120.10">
    <property type="entry name" value="Cytochrome c/b562"/>
    <property type="match status" value="1"/>
</dbReference>
<dbReference type="InterPro" id="IPR009155">
    <property type="entry name" value="Cyt_b562"/>
</dbReference>
<dbReference type="InterPro" id="IPR010980">
    <property type="entry name" value="Cyt_c/b562"/>
</dbReference>
<dbReference type="NCBIfam" id="NF011632">
    <property type="entry name" value="PRK15058.1"/>
    <property type="match status" value="1"/>
</dbReference>
<dbReference type="Pfam" id="PF07361">
    <property type="entry name" value="Cytochrom_B562"/>
    <property type="match status" value="1"/>
</dbReference>
<dbReference type="PIRSF" id="PIRSF000029">
    <property type="entry name" value="Cytochrome_b562"/>
    <property type="match status" value="1"/>
</dbReference>
<dbReference type="SUPFAM" id="SSF47175">
    <property type="entry name" value="Cytochromes"/>
    <property type="match status" value="1"/>
</dbReference>
<protein>
    <recommendedName>
        <fullName>Soluble cytochrome b562</fullName>
        <shortName>Cytochrome b-562</shortName>
    </recommendedName>
</protein>
<keyword id="KW-0249">Electron transport</keyword>
<keyword id="KW-0349">Heme</keyword>
<keyword id="KW-0408">Iron</keyword>
<keyword id="KW-0479">Metal-binding</keyword>
<keyword id="KW-0574">Periplasm</keyword>
<keyword id="KW-1185">Reference proteome</keyword>
<keyword id="KW-0732">Signal</keyword>
<keyword id="KW-0813">Transport</keyword>
<evidence type="ECO:0000250" key="1"/>
<evidence type="ECO:0000305" key="2"/>
<feature type="signal peptide" evidence="1">
    <location>
        <begin position="1"/>
        <end position="22"/>
    </location>
</feature>
<feature type="chain" id="PRO_0000042666" description="Soluble cytochrome b562">
    <location>
        <begin position="23"/>
        <end position="128"/>
    </location>
</feature>
<feature type="binding site" description="axial binding residue" evidence="1">
    <location>
        <position position="29"/>
    </location>
    <ligand>
        <name>heme b</name>
        <dbReference type="ChEBI" id="CHEBI:60344"/>
    </ligand>
    <ligandPart>
        <name>Fe</name>
        <dbReference type="ChEBI" id="CHEBI:18248"/>
    </ligandPart>
</feature>
<feature type="binding site" description="axial binding residue" evidence="1">
    <location>
        <position position="124"/>
    </location>
    <ligand>
        <name>heme b</name>
        <dbReference type="ChEBI" id="CHEBI:60344"/>
    </ligand>
    <ligandPart>
        <name>Fe</name>
        <dbReference type="ChEBI" id="CHEBI:18248"/>
    </ligandPart>
</feature>
<reference key="1">
    <citation type="journal article" date="2001" name="Nature">
        <title>Genome sequence of enterohaemorrhagic Escherichia coli O157:H7.</title>
        <authorList>
            <person name="Perna N.T."/>
            <person name="Plunkett G. III"/>
            <person name="Burland V."/>
            <person name="Mau B."/>
            <person name="Glasner J.D."/>
            <person name="Rose D.J."/>
            <person name="Mayhew G.F."/>
            <person name="Evans P.S."/>
            <person name="Gregor J."/>
            <person name="Kirkpatrick H.A."/>
            <person name="Posfai G."/>
            <person name="Hackett J."/>
            <person name="Klink S."/>
            <person name="Boutin A."/>
            <person name="Shao Y."/>
            <person name="Miller L."/>
            <person name="Grotbeck E.J."/>
            <person name="Davis N.W."/>
            <person name="Lim A."/>
            <person name="Dimalanta E.T."/>
            <person name="Potamousis K."/>
            <person name="Apodaca J."/>
            <person name="Anantharaman T.S."/>
            <person name="Lin J."/>
            <person name="Yen G."/>
            <person name="Schwartz D.C."/>
            <person name="Welch R.A."/>
            <person name="Blattner F.R."/>
        </authorList>
    </citation>
    <scope>NUCLEOTIDE SEQUENCE [LARGE SCALE GENOMIC DNA]</scope>
    <source>
        <strain>O157:H7 / EDL933 / ATCC 700927 / EHEC</strain>
    </source>
</reference>
<reference key="2">
    <citation type="journal article" date="2001" name="DNA Res.">
        <title>Complete genome sequence of enterohemorrhagic Escherichia coli O157:H7 and genomic comparison with a laboratory strain K-12.</title>
        <authorList>
            <person name="Hayashi T."/>
            <person name="Makino K."/>
            <person name="Ohnishi M."/>
            <person name="Kurokawa K."/>
            <person name="Ishii K."/>
            <person name="Yokoyama K."/>
            <person name="Han C.-G."/>
            <person name="Ohtsubo E."/>
            <person name="Nakayama K."/>
            <person name="Murata T."/>
            <person name="Tanaka M."/>
            <person name="Tobe T."/>
            <person name="Iida T."/>
            <person name="Takami H."/>
            <person name="Honda T."/>
            <person name="Sasakawa C."/>
            <person name="Ogasawara N."/>
            <person name="Yasunaga T."/>
            <person name="Kuhara S."/>
            <person name="Shiba T."/>
            <person name="Hattori M."/>
            <person name="Shinagawa H."/>
        </authorList>
    </citation>
    <scope>NUCLEOTIDE SEQUENCE [LARGE SCALE GENOMIC DNA]</scope>
    <source>
        <strain>O157:H7 / Sakai / RIMD 0509952 / EHEC</strain>
    </source>
</reference>
<accession>P0ABE8</accession>
<accession>P00192</accession>
<accession>P76805</accession>
<accession>Q8XCE3</accession>